<organism>
    <name type="scientific">Streptococcus pyogenes serotype M12 (strain MGAS2096)</name>
    <dbReference type="NCBI Taxonomy" id="370553"/>
    <lineage>
        <taxon>Bacteria</taxon>
        <taxon>Bacillati</taxon>
        <taxon>Bacillota</taxon>
        <taxon>Bacilli</taxon>
        <taxon>Lactobacillales</taxon>
        <taxon>Streptococcaceae</taxon>
        <taxon>Streptococcus</taxon>
    </lineage>
</organism>
<gene>
    <name evidence="1" type="primary">fabZ</name>
    <name type="ordered locus">MGAS2096_Spy1514</name>
</gene>
<reference key="1">
    <citation type="journal article" date="2006" name="Proc. Natl. Acad. Sci. U.S.A.">
        <title>Molecular genetic anatomy of inter- and intraserotype variation in the human bacterial pathogen group A Streptococcus.</title>
        <authorList>
            <person name="Beres S.B."/>
            <person name="Richter E.W."/>
            <person name="Nagiec M.J."/>
            <person name="Sumby P."/>
            <person name="Porcella S.F."/>
            <person name="DeLeo F.R."/>
            <person name="Musser J.M."/>
        </authorList>
    </citation>
    <scope>NUCLEOTIDE SEQUENCE [LARGE SCALE GENOMIC DNA]</scope>
    <source>
        <strain>MGAS2096</strain>
    </source>
</reference>
<keyword id="KW-0963">Cytoplasm</keyword>
<keyword id="KW-0441">Lipid A biosynthesis</keyword>
<keyword id="KW-0444">Lipid biosynthesis</keyword>
<keyword id="KW-0443">Lipid metabolism</keyword>
<keyword id="KW-0456">Lyase</keyword>
<sequence>MDIREIQAALPHRYPMLLVDRVLEVSDDHIVAIKNVTINEPFFNGHFPHYPVMPGVLIMEALAQTAGVLELSKEENKGKLVFYAGMDKVKFKKQVVPGDQLVMTATFIKRRGTIAVVEARAEVDGKLAASGTLTFACGQ</sequence>
<dbReference type="EC" id="4.2.1.59" evidence="1"/>
<dbReference type="EMBL" id="CP000261">
    <property type="protein sequence ID" value="ABF36566.1"/>
    <property type="status" value="ALT_INIT"/>
    <property type="molecule type" value="Genomic_DNA"/>
</dbReference>
<dbReference type="SMR" id="Q1JA95"/>
<dbReference type="KEGG" id="spj:MGAS2096_Spy1514"/>
<dbReference type="HOGENOM" id="CLU_078912_1_2_9"/>
<dbReference type="GO" id="GO:0005737">
    <property type="term" value="C:cytoplasm"/>
    <property type="evidence" value="ECO:0007669"/>
    <property type="project" value="UniProtKB-SubCell"/>
</dbReference>
<dbReference type="GO" id="GO:0016020">
    <property type="term" value="C:membrane"/>
    <property type="evidence" value="ECO:0007669"/>
    <property type="project" value="GOC"/>
</dbReference>
<dbReference type="GO" id="GO:0019171">
    <property type="term" value="F:(3R)-hydroxyacyl-[acyl-carrier-protein] dehydratase activity"/>
    <property type="evidence" value="ECO:0007669"/>
    <property type="project" value="UniProtKB-EC"/>
</dbReference>
<dbReference type="GO" id="GO:0006633">
    <property type="term" value="P:fatty acid biosynthetic process"/>
    <property type="evidence" value="ECO:0007669"/>
    <property type="project" value="UniProtKB-UniRule"/>
</dbReference>
<dbReference type="GO" id="GO:0009245">
    <property type="term" value="P:lipid A biosynthetic process"/>
    <property type="evidence" value="ECO:0007669"/>
    <property type="project" value="UniProtKB-UniRule"/>
</dbReference>
<dbReference type="CDD" id="cd01288">
    <property type="entry name" value="FabZ"/>
    <property type="match status" value="1"/>
</dbReference>
<dbReference type="FunFam" id="3.10.129.10:FF:000001">
    <property type="entry name" value="3-hydroxyacyl-[acyl-carrier-protein] dehydratase FabZ"/>
    <property type="match status" value="1"/>
</dbReference>
<dbReference type="Gene3D" id="3.10.129.10">
    <property type="entry name" value="Hotdog Thioesterase"/>
    <property type="match status" value="1"/>
</dbReference>
<dbReference type="HAMAP" id="MF_00406">
    <property type="entry name" value="FabZ"/>
    <property type="match status" value="1"/>
</dbReference>
<dbReference type="InterPro" id="IPR013114">
    <property type="entry name" value="FabA_FabZ"/>
</dbReference>
<dbReference type="InterPro" id="IPR010084">
    <property type="entry name" value="FabZ"/>
</dbReference>
<dbReference type="InterPro" id="IPR029069">
    <property type="entry name" value="HotDog_dom_sf"/>
</dbReference>
<dbReference type="NCBIfam" id="TIGR01750">
    <property type="entry name" value="fabZ"/>
    <property type="match status" value="1"/>
</dbReference>
<dbReference type="NCBIfam" id="NF000582">
    <property type="entry name" value="PRK00006.1"/>
    <property type="match status" value="1"/>
</dbReference>
<dbReference type="PANTHER" id="PTHR30272">
    <property type="entry name" value="3-HYDROXYACYL-[ACYL-CARRIER-PROTEIN] DEHYDRATASE"/>
    <property type="match status" value="1"/>
</dbReference>
<dbReference type="PANTHER" id="PTHR30272:SF1">
    <property type="entry name" value="3-HYDROXYACYL-[ACYL-CARRIER-PROTEIN] DEHYDRATASE"/>
    <property type="match status" value="1"/>
</dbReference>
<dbReference type="Pfam" id="PF07977">
    <property type="entry name" value="FabA"/>
    <property type="match status" value="1"/>
</dbReference>
<dbReference type="SUPFAM" id="SSF54637">
    <property type="entry name" value="Thioesterase/thiol ester dehydrase-isomerase"/>
    <property type="match status" value="1"/>
</dbReference>
<accession>Q1JA95</accession>
<protein>
    <recommendedName>
        <fullName evidence="1">3-hydroxyacyl-[acyl-carrier-protein] dehydratase FabZ</fullName>
        <ecNumber evidence="1">4.2.1.59</ecNumber>
    </recommendedName>
    <alternativeName>
        <fullName evidence="1">(3R)-hydroxymyristoyl-[acyl-carrier-protein] dehydratase</fullName>
        <shortName evidence="1">(3R)-hydroxymyristoyl-ACP dehydrase</shortName>
    </alternativeName>
    <alternativeName>
        <fullName evidence="1">Beta-hydroxyacyl-ACP dehydratase</fullName>
    </alternativeName>
</protein>
<evidence type="ECO:0000255" key="1">
    <source>
        <dbReference type="HAMAP-Rule" id="MF_00406"/>
    </source>
</evidence>
<evidence type="ECO:0000305" key="2"/>
<proteinExistence type="inferred from homology"/>
<feature type="chain" id="PRO_0000340805" description="3-hydroxyacyl-[acyl-carrier-protein] dehydratase FabZ">
    <location>
        <begin position="1"/>
        <end position="139"/>
    </location>
</feature>
<feature type="active site" evidence="1">
    <location>
        <position position="46"/>
    </location>
</feature>
<comment type="function">
    <text evidence="1">Involved in unsaturated fatty acids biosynthesis. Catalyzes the dehydration of short chain beta-hydroxyacyl-ACPs and long chain saturated and unsaturated beta-hydroxyacyl-ACPs.</text>
</comment>
<comment type="catalytic activity">
    <reaction evidence="1">
        <text>a (3R)-hydroxyacyl-[ACP] = a (2E)-enoyl-[ACP] + H2O</text>
        <dbReference type="Rhea" id="RHEA:13097"/>
        <dbReference type="Rhea" id="RHEA-COMP:9925"/>
        <dbReference type="Rhea" id="RHEA-COMP:9945"/>
        <dbReference type="ChEBI" id="CHEBI:15377"/>
        <dbReference type="ChEBI" id="CHEBI:78784"/>
        <dbReference type="ChEBI" id="CHEBI:78827"/>
        <dbReference type="EC" id="4.2.1.59"/>
    </reaction>
</comment>
<comment type="subcellular location">
    <subcellularLocation>
        <location evidence="1">Cytoplasm</location>
    </subcellularLocation>
</comment>
<comment type="similarity">
    <text evidence="1">Belongs to the thioester dehydratase family. FabZ subfamily.</text>
</comment>
<comment type="sequence caution" evidence="2">
    <conflict type="erroneous initiation">
        <sequence resource="EMBL-CDS" id="ABF36566"/>
    </conflict>
</comment>
<name>FABZ_STRPB</name>